<comment type="function">
    <text evidence="1">The RuvA-RuvB-RuvC complex processes Holliday junction (HJ) DNA during genetic recombination and DNA repair, while the RuvA-RuvB complex plays an important role in the rescue of blocked DNA replication forks via replication fork reversal (RFR). RuvA specifically binds to HJ cruciform DNA, conferring on it an open structure. The RuvB hexamer acts as an ATP-dependent pump, pulling dsDNA into and through the RuvAB complex. RuvB forms 2 homohexamers on either side of HJ DNA bound by 1 or 2 RuvA tetramers; 4 subunits per hexamer contact DNA at a time. Coordinated motions by a converter formed by DNA-disengaged RuvB subunits stimulates ATP hydrolysis and nucleotide exchange. Immobilization of the converter enables RuvB to convert the ATP-contained energy into a lever motion, pulling 2 nucleotides of DNA out of the RuvA tetramer per ATP hydrolyzed, thus driving DNA branch migration. The RuvB motors rotate together with the DNA substrate, which together with the progressing nucleotide cycle form the mechanistic basis for DNA recombination by continuous HJ branch migration. Branch migration allows RuvC to scan DNA until it finds its consensus sequence, where it cleaves and resolves cruciform DNA.</text>
</comment>
<comment type="catalytic activity">
    <reaction evidence="1">
        <text>ATP + H2O = ADP + phosphate + H(+)</text>
        <dbReference type="Rhea" id="RHEA:13065"/>
        <dbReference type="ChEBI" id="CHEBI:15377"/>
        <dbReference type="ChEBI" id="CHEBI:15378"/>
        <dbReference type="ChEBI" id="CHEBI:30616"/>
        <dbReference type="ChEBI" id="CHEBI:43474"/>
        <dbReference type="ChEBI" id="CHEBI:456216"/>
    </reaction>
</comment>
<comment type="subunit">
    <text evidence="1">Homohexamer. Forms an RuvA(8)-RuvB(12)-Holliday junction (HJ) complex. HJ DNA is sandwiched between 2 RuvA tetramers; dsDNA enters through RuvA and exits via RuvB. An RuvB hexamer assembles on each DNA strand where it exits the tetramer. Each RuvB hexamer is contacted by two RuvA subunits (via domain III) on 2 adjacent RuvB subunits; this complex drives branch migration. In the full resolvosome a probable DNA-RuvA(4)-RuvB(12)-RuvC(2) complex forms which resolves the HJ.</text>
</comment>
<comment type="subcellular location">
    <subcellularLocation>
        <location evidence="1">Cytoplasm</location>
    </subcellularLocation>
</comment>
<comment type="domain">
    <text evidence="1">Has 3 domains, the large (RuvB-L) and small ATPase (RuvB-S) domains and the C-terminal head (RuvB-H) domain. The head domain binds DNA, while the ATPase domains jointly bind ATP, ADP or are empty depending on the state of the subunit in the translocation cycle. During a single DNA translocation step the structure of each domain remains the same, but their relative positions change.</text>
</comment>
<comment type="similarity">
    <text evidence="1">Belongs to the RuvB family.</text>
</comment>
<name>RUVB_NEIMB</name>
<evidence type="ECO:0000255" key="1">
    <source>
        <dbReference type="HAMAP-Rule" id="MF_00016"/>
    </source>
</evidence>
<dbReference type="EC" id="3.6.4.-" evidence="1"/>
<dbReference type="EMBL" id="AE002098">
    <property type="protein sequence ID" value="AAF41624.1"/>
    <property type="molecule type" value="Genomic_DNA"/>
</dbReference>
<dbReference type="PIR" id="H81105">
    <property type="entry name" value="H81105"/>
</dbReference>
<dbReference type="RefSeq" id="NP_274267.1">
    <property type="nucleotide sequence ID" value="NC_003112.2"/>
</dbReference>
<dbReference type="RefSeq" id="WP_002220958.1">
    <property type="nucleotide sequence ID" value="NC_003112.2"/>
</dbReference>
<dbReference type="SMR" id="Q9JZ86"/>
<dbReference type="FunCoup" id="Q9JZ86">
    <property type="interactions" value="248"/>
</dbReference>
<dbReference type="STRING" id="122586.NMB1243"/>
<dbReference type="PaxDb" id="122586-NMB1243"/>
<dbReference type="KEGG" id="nme:NMB1243"/>
<dbReference type="PATRIC" id="fig|122586.8.peg.1554"/>
<dbReference type="HOGENOM" id="CLU_055599_1_0_4"/>
<dbReference type="InParanoid" id="Q9JZ86"/>
<dbReference type="OrthoDB" id="9804478at2"/>
<dbReference type="Proteomes" id="UP000000425">
    <property type="component" value="Chromosome"/>
</dbReference>
<dbReference type="GO" id="GO:0005737">
    <property type="term" value="C:cytoplasm"/>
    <property type="evidence" value="ECO:0007669"/>
    <property type="project" value="UniProtKB-SubCell"/>
</dbReference>
<dbReference type="GO" id="GO:0048476">
    <property type="term" value="C:Holliday junction resolvase complex"/>
    <property type="evidence" value="ECO:0007669"/>
    <property type="project" value="UniProtKB-UniRule"/>
</dbReference>
<dbReference type="GO" id="GO:0005524">
    <property type="term" value="F:ATP binding"/>
    <property type="evidence" value="ECO:0007669"/>
    <property type="project" value="UniProtKB-UniRule"/>
</dbReference>
<dbReference type="GO" id="GO:0016887">
    <property type="term" value="F:ATP hydrolysis activity"/>
    <property type="evidence" value="ECO:0007669"/>
    <property type="project" value="InterPro"/>
</dbReference>
<dbReference type="GO" id="GO:0000400">
    <property type="term" value="F:four-way junction DNA binding"/>
    <property type="evidence" value="ECO:0007669"/>
    <property type="project" value="UniProtKB-UniRule"/>
</dbReference>
<dbReference type="GO" id="GO:0009378">
    <property type="term" value="F:four-way junction helicase activity"/>
    <property type="evidence" value="ECO:0007669"/>
    <property type="project" value="InterPro"/>
</dbReference>
<dbReference type="GO" id="GO:0006310">
    <property type="term" value="P:DNA recombination"/>
    <property type="evidence" value="ECO:0007669"/>
    <property type="project" value="UniProtKB-UniRule"/>
</dbReference>
<dbReference type="GO" id="GO:0006281">
    <property type="term" value="P:DNA repair"/>
    <property type="evidence" value="ECO:0007669"/>
    <property type="project" value="UniProtKB-UniRule"/>
</dbReference>
<dbReference type="CDD" id="cd00009">
    <property type="entry name" value="AAA"/>
    <property type="match status" value="1"/>
</dbReference>
<dbReference type="FunFam" id="1.10.10.10:FF:000086">
    <property type="entry name" value="Holliday junction ATP-dependent DNA helicase RuvB"/>
    <property type="match status" value="1"/>
</dbReference>
<dbReference type="FunFam" id="1.10.8.60:FF:000023">
    <property type="entry name" value="Holliday junction ATP-dependent DNA helicase RuvB"/>
    <property type="match status" value="1"/>
</dbReference>
<dbReference type="FunFam" id="3.40.50.300:FF:000073">
    <property type="entry name" value="Holliday junction ATP-dependent DNA helicase RuvB"/>
    <property type="match status" value="1"/>
</dbReference>
<dbReference type="Gene3D" id="1.10.8.60">
    <property type="match status" value="1"/>
</dbReference>
<dbReference type="Gene3D" id="3.40.50.300">
    <property type="entry name" value="P-loop containing nucleotide triphosphate hydrolases"/>
    <property type="match status" value="1"/>
</dbReference>
<dbReference type="Gene3D" id="1.10.10.10">
    <property type="entry name" value="Winged helix-like DNA-binding domain superfamily/Winged helix DNA-binding domain"/>
    <property type="match status" value="1"/>
</dbReference>
<dbReference type="HAMAP" id="MF_00016">
    <property type="entry name" value="DNA_HJ_migration_RuvB"/>
    <property type="match status" value="1"/>
</dbReference>
<dbReference type="InterPro" id="IPR003593">
    <property type="entry name" value="AAA+_ATPase"/>
</dbReference>
<dbReference type="InterPro" id="IPR041445">
    <property type="entry name" value="AAA_lid_4"/>
</dbReference>
<dbReference type="InterPro" id="IPR004605">
    <property type="entry name" value="DNA_helicase_Holl-junc_RuvB"/>
</dbReference>
<dbReference type="InterPro" id="IPR027417">
    <property type="entry name" value="P-loop_NTPase"/>
</dbReference>
<dbReference type="InterPro" id="IPR008824">
    <property type="entry name" value="RuvB-like_N"/>
</dbReference>
<dbReference type="InterPro" id="IPR008823">
    <property type="entry name" value="RuvB_C"/>
</dbReference>
<dbReference type="InterPro" id="IPR036388">
    <property type="entry name" value="WH-like_DNA-bd_sf"/>
</dbReference>
<dbReference type="InterPro" id="IPR036390">
    <property type="entry name" value="WH_DNA-bd_sf"/>
</dbReference>
<dbReference type="NCBIfam" id="NF000868">
    <property type="entry name" value="PRK00080.1"/>
    <property type="match status" value="1"/>
</dbReference>
<dbReference type="NCBIfam" id="TIGR00635">
    <property type="entry name" value="ruvB"/>
    <property type="match status" value="1"/>
</dbReference>
<dbReference type="PANTHER" id="PTHR42848">
    <property type="match status" value="1"/>
</dbReference>
<dbReference type="PANTHER" id="PTHR42848:SF1">
    <property type="entry name" value="HOLLIDAY JUNCTION BRANCH MIGRATION COMPLEX SUBUNIT RUVB"/>
    <property type="match status" value="1"/>
</dbReference>
<dbReference type="Pfam" id="PF17864">
    <property type="entry name" value="AAA_lid_4"/>
    <property type="match status" value="1"/>
</dbReference>
<dbReference type="Pfam" id="PF05491">
    <property type="entry name" value="RuvB_C"/>
    <property type="match status" value="1"/>
</dbReference>
<dbReference type="Pfam" id="PF05496">
    <property type="entry name" value="RuvB_N"/>
    <property type="match status" value="1"/>
</dbReference>
<dbReference type="SMART" id="SM00382">
    <property type="entry name" value="AAA"/>
    <property type="match status" value="1"/>
</dbReference>
<dbReference type="SUPFAM" id="SSF52540">
    <property type="entry name" value="P-loop containing nucleoside triphosphate hydrolases"/>
    <property type="match status" value="1"/>
</dbReference>
<dbReference type="SUPFAM" id="SSF46785">
    <property type="entry name" value="Winged helix' DNA-binding domain"/>
    <property type="match status" value="1"/>
</dbReference>
<proteinExistence type="inferred from homology"/>
<keyword id="KW-0067">ATP-binding</keyword>
<keyword id="KW-0963">Cytoplasm</keyword>
<keyword id="KW-0227">DNA damage</keyword>
<keyword id="KW-0233">DNA recombination</keyword>
<keyword id="KW-0234">DNA repair</keyword>
<keyword id="KW-0238">DNA-binding</keyword>
<keyword id="KW-0378">Hydrolase</keyword>
<keyword id="KW-0547">Nucleotide-binding</keyword>
<keyword id="KW-1185">Reference proteome</keyword>
<sequence length="343" mass="37660">MLQTDNLTAAQPQRIVAAQTASAQEELLERALRPKTLDDYIGQDKAKEQLAIFIQAAKKRGEALDHVLLFGPPGLGKTTLAHIIAKELGVNLRQTSGPVLERAGDLAALLTNLDPHDVLFIDEIHRLSPVVEEILYPALEDYRLDIMIGEGPAARSVKIDLPPFTLIGATTRAGMLTNPLRDRFGIVSRLEFYENRDLTTIVSRSAQLLQLDMSEEGAEEIAKRSRGTPRIANRLLRRVRDFADVKNNGTIDGGIADAALSMLDVDAQGLDVMDRKFLEAVLHKFGGGPVGLDNVAAAIGESTDTIEDVIEPYLIQQGFLQRTPRGRMATERAYLHFGLPVEK</sequence>
<protein>
    <recommendedName>
        <fullName evidence="1">Holliday junction branch migration complex subunit RuvB</fullName>
        <ecNumber evidence="1">3.6.4.-</ecNumber>
    </recommendedName>
</protein>
<gene>
    <name evidence="1" type="primary">ruvB</name>
    <name type="ordered locus">NMB1243</name>
</gene>
<reference key="1">
    <citation type="journal article" date="2000" name="Science">
        <title>Complete genome sequence of Neisseria meningitidis serogroup B strain MC58.</title>
        <authorList>
            <person name="Tettelin H."/>
            <person name="Saunders N.J."/>
            <person name="Heidelberg J.F."/>
            <person name="Jeffries A.C."/>
            <person name="Nelson K.E."/>
            <person name="Eisen J.A."/>
            <person name="Ketchum K.A."/>
            <person name="Hood D.W."/>
            <person name="Peden J.F."/>
            <person name="Dodson R.J."/>
            <person name="Nelson W.C."/>
            <person name="Gwinn M.L."/>
            <person name="DeBoy R.T."/>
            <person name="Peterson J.D."/>
            <person name="Hickey E.K."/>
            <person name="Haft D.H."/>
            <person name="Salzberg S.L."/>
            <person name="White O."/>
            <person name="Fleischmann R.D."/>
            <person name="Dougherty B.A."/>
            <person name="Mason T.M."/>
            <person name="Ciecko A."/>
            <person name="Parksey D.S."/>
            <person name="Blair E."/>
            <person name="Cittone H."/>
            <person name="Clark E.B."/>
            <person name="Cotton M.D."/>
            <person name="Utterback T.R."/>
            <person name="Khouri H.M."/>
            <person name="Qin H."/>
            <person name="Vamathevan J.J."/>
            <person name="Gill J."/>
            <person name="Scarlato V."/>
            <person name="Masignani V."/>
            <person name="Pizza M."/>
            <person name="Grandi G."/>
            <person name="Sun L."/>
            <person name="Smith H.O."/>
            <person name="Fraser C.M."/>
            <person name="Moxon E.R."/>
            <person name="Rappuoli R."/>
            <person name="Venter J.C."/>
        </authorList>
    </citation>
    <scope>NUCLEOTIDE SEQUENCE [LARGE SCALE GENOMIC DNA]</scope>
    <source>
        <strain>ATCC BAA-335 / MC58</strain>
    </source>
</reference>
<feature type="chain" id="PRO_0000165565" description="Holliday junction branch migration complex subunit RuvB">
    <location>
        <begin position="1"/>
        <end position="343"/>
    </location>
</feature>
<feature type="region of interest" description="Large ATPase domain (RuvB-L)" evidence="1">
    <location>
        <begin position="4"/>
        <end position="193"/>
    </location>
</feature>
<feature type="region of interest" description="Small ATPAse domain (RuvB-S)" evidence="1">
    <location>
        <begin position="194"/>
        <end position="264"/>
    </location>
</feature>
<feature type="region of interest" description="Head domain (RuvB-H)" evidence="1">
    <location>
        <begin position="267"/>
        <end position="343"/>
    </location>
</feature>
<feature type="binding site" evidence="1">
    <location>
        <position position="32"/>
    </location>
    <ligand>
        <name>ATP</name>
        <dbReference type="ChEBI" id="CHEBI:30616"/>
    </ligand>
</feature>
<feature type="binding site" evidence="1">
    <location>
        <position position="33"/>
    </location>
    <ligand>
        <name>ATP</name>
        <dbReference type="ChEBI" id="CHEBI:30616"/>
    </ligand>
</feature>
<feature type="binding site" evidence="1">
    <location>
        <position position="74"/>
    </location>
    <ligand>
        <name>ATP</name>
        <dbReference type="ChEBI" id="CHEBI:30616"/>
    </ligand>
</feature>
<feature type="binding site" evidence="1">
    <location>
        <position position="77"/>
    </location>
    <ligand>
        <name>ATP</name>
        <dbReference type="ChEBI" id="CHEBI:30616"/>
    </ligand>
</feature>
<feature type="binding site" evidence="1">
    <location>
        <position position="78"/>
    </location>
    <ligand>
        <name>ATP</name>
        <dbReference type="ChEBI" id="CHEBI:30616"/>
    </ligand>
</feature>
<feature type="binding site" evidence="1">
    <location>
        <position position="78"/>
    </location>
    <ligand>
        <name>Mg(2+)</name>
        <dbReference type="ChEBI" id="CHEBI:18420"/>
    </ligand>
</feature>
<feature type="binding site" evidence="1">
    <location>
        <position position="79"/>
    </location>
    <ligand>
        <name>ATP</name>
        <dbReference type="ChEBI" id="CHEBI:30616"/>
    </ligand>
</feature>
<feature type="binding site" evidence="1">
    <location>
        <begin position="140"/>
        <end position="142"/>
    </location>
    <ligand>
        <name>ATP</name>
        <dbReference type="ChEBI" id="CHEBI:30616"/>
    </ligand>
</feature>
<feature type="binding site" evidence="1">
    <location>
        <position position="183"/>
    </location>
    <ligand>
        <name>ATP</name>
        <dbReference type="ChEBI" id="CHEBI:30616"/>
    </ligand>
</feature>
<feature type="binding site" evidence="1">
    <location>
        <position position="193"/>
    </location>
    <ligand>
        <name>ATP</name>
        <dbReference type="ChEBI" id="CHEBI:30616"/>
    </ligand>
</feature>
<feature type="binding site" evidence="1">
    <location>
        <position position="230"/>
    </location>
    <ligand>
        <name>ATP</name>
        <dbReference type="ChEBI" id="CHEBI:30616"/>
    </ligand>
</feature>
<feature type="binding site" evidence="1">
    <location>
        <position position="322"/>
    </location>
    <ligand>
        <name>DNA</name>
        <dbReference type="ChEBI" id="CHEBI:16991"/>
    </ligand>
</feature>
<feature type="binding site" evidence="1">
    <location>
        <position position="327"/>
    </location>
    <ligand>
        <name>DNA</name>
        <dbReference type="ChEBI" id="CHEBI:16991"/>
    </ligand>
</feature>
<organism>
    <name type="scientific">Neisseria meningitidis serogroup B (strain ATCC BAA-335 / MC58)</name>
    <dbReference type="NCBI Taxonomy" id="122586"/>
    <lineage>
        <taxon>Bacteria</taxon>
        <taxon>Pseudomonadati</taxon>
        <taxon>Pseudomonadota</taxon>
        <taxon>Betaproteobacteria</taxon>
        <taxon>Neisseriales</taxon>
        <taxon>Neisseriaceae</taxon>
        <taxon>Neisseria</taxon>
    </lineage>
</organism>
<accession>Q9JZ86</accession>